<reference key="1">
    <citation type="journal article" date="2007" name="Environ. Microbiol.">
        <title>Whole-genome analysis of the ammonia-oxidizing bacterium, Nitrosomonas eutropha C91: implications for niche adaptation.</title>
        <authorList>
            <person name="Stein L.Y."/>
            <person name="Arp D.J."/>
            <person name="Berube P.M."/>
            <person name="Chain P.S."/>
            <person name="Hauser L."/>
            <person name="Jetten M.S."/>
            <person name="Klotz M.G."/>
            <person name="Larimer F.W."/>
            <person name="Norton J.M."/>
            <person name="Op den Camp H.J.M."/>
            <person name="Shin M."/>
            <person name="Wei X."/>
        </authorList>
    </citation>
    <scope>NUCLEOTIDE SEQUENCE [LARGE SCALE GENOMIC DNA]</scope>
    <source>
        <strain>DSM 101675 / C91 / Nm57</strain>
    </source>
</reference>
<gene>
    <name evidence="1" type="primary">rlmN</name>
    <name type="ordered locus">Neut_2171</name>
</gene>
<keyword id="KW-0004">4Fe-4S</keyword>
<keyword id="KW-0963">Cytoplasm</keyword>
<keyword id="KW-1015">Disulfide bond</keyword>
<keyword id="KW-0408">Iron</keyword>
<keyword id="KW-0411">Iron-sulfur</keyword>
<keyword id="KW-0479">Metal-binding</keyword>
<keyword id="KW-0489">Methyltransferase</keyword>
<keyword id="KW-0698">rRNA processing</keyword>
<keyword id="KW-0949">S-adenosyl-L-methionine</keyword>
<keyword id="KW-0808">Transferase</keyword>
<keyword id="KW-0819">tRNA processing</keyword>
<dbReference type="EC" id="2.1.1.192" evidence="1"/>
<dbReference type="EMBL" id="CP000450">
    <property type="protein sequence ID" value="ABI60393.1"/>
    <property type="molecule type" value="Genomic_DNA"/>
</dbReference>
<dbReference type="RefSeq" id="WP_011635190.1">
    <property type="nucleotide sequence ID" value="NC_008344.1"/>
</dbReference>
<dbReference type="SMR" id="Q0AE39"/>
<dbReference type="STRING" id="335283.Neut_2171"/>
<dbReference type="KEGG" id="net:Neut_2171"/>
<dbReference type="eggNOG" id="COG0820">
    <property type="taxonomic scope" value="Bacteria"/>
</dbReference>
<dbReference type="HOGENOM" id="CLU_029101_0_0_4"/>
<dbReference type="OrthoDB" id="9793973at2"/>
<dbReference type="Proteomes" id="UP000001966">
    <property type="component" value="Chromosome"/>
</dbReference>
<dbReference type="GO" id="GO:0005737">
    <property type="term" value="C:cytoplasm"/>
    <property type="evidence" value="ECO:0007669"/>
    <property type="project" value="UniProtKB-SubCell"/>
</dbReference>
<dbReference type="GO" id="GO:0051539">
    <property type="term" value="F:4 iron, 4 sulfur cluster binding"/>
    <property type="evidence" value="ECO:0007669"/>
    <property type="project" value="UniProtKB-UniRule"/>
</dbReference>
<dbReference type="GO" id="GO:0046872">
    <property type="term" value="F:metal ion binding"/>
    <property type="evidence" value="ECO:0007669"/>
    <property type="project" value="UniProtKB-KW"/>
</dbReference>
<dbReference type="GO" id="GO:0070040">
    <property type="term" value="F:rRNA (adenine(2503)-C2-)-methyltransferase activity"/>
    <property type="evidence" value="ECO:0007669"/>
    <property type="project" value="UniProtKB-UniRule"/>
</dbReference>
<dbReference type="GO" id="GO:0019843">
    <property type="term" value="F:rRNA binding"/>
    <property type="evidence" value="ECO:0007669"/>
    <property type="project" value="UniProtKB-UniRule"/>
</dbReference>
<dbReference type="GO" id="GO:0002935">
    <property type="term" value="F:tRNA (adenine(37)-C2)-methyltransferase activity"/>
    <property type="evidence" value="ECO:0007669"/>
    <property type="project" value="UniProtKB-UniRule"/>
</dbReference>
<dbReference type="GO" id="GO:0000049">
    <property type="term" value="F:tRNA binding"/>
    <property type="evidence" value="ECO:0007669"/>
    <property type="project" value="UniProtKB-UniRule"/>
</dbReference>
<dbReference type="GO" id="GO:0070475">
    <property type="term" value="P:rRNA base methylation"/>
    <property type="evidence" value="ECO:0007669"/>
    <property type="project" value="UniProtKB-UniRule"/>
</dbReference>
<dbReference type="GO" id="GO:0030488">
    <property type="term" value="P:tRNA methylation"/>
    <property type="evidence" value="ECO:0007669"/>
    <property type="project" value="UniProtKB-UniRule"/>
</dbReference>
<dbReference type="CDD" id="cd01335">
    <property type="entry name" value="Radical_SAM"/>
    <property type="match status" value="1"/>
</dbReference>
<dbReference type="FunFam" id="3.20.20.70:FF:000008">
    <property type="entry name" value="Dual-specificity RNA methyltransferase RlmN"/>
    <property type="match status" value="1"/>
</dbReference>
<dbReference type="Gene3D" id="1.10.150.530">
    <property type="match status" value="1"/>
</dbReference>
<dbReference type="Gene3D" id="3.20.20.70">
    <property type="entry name" value="Aldolase class I"/>
    <property type="match status" value="1"/>
</dbReference>
<dbReference type="HAMAP" id="MF_01849">
    <property type="entry name" value="RNA_methyltr_RlmN"/>
    <property type="match status" value="1"/>
</dbReference>
<dbReference type="InterPro" id="IPR013785">
    <property type="entry name" value="Aldolase_TIM"/>
</dbReference>
<dbReference type="InterPro" id="IPR040072">
    <property type="entry name" value="Methyltransferase_A"/>
</dbReference>
<dbReference type="InterPro" id="IPR048641">
    <property type="entry name" value="RlmN_N"/>
</dbReference>
<dbReference type="InterPro" id="IPR027492">
    <property type="entry name" value="RNA_MTrfase_RlmN"/>
</dbReference>
<dbReference type="InterPro" id="IPR004383">
    <property type="entry name" value="rRNA_lsu_MTrfase_RlmN/Cfr"/>
</dbReference>
<dbReference type="InterPro" id="IPR007197">
    <property type="entry name" value="rSAM"/>
</dbReference>
<dbReference type="NCBIfam" id="TIGR00048">
    <property type="entry name" value="rRNA_mod_RlmN"/>
    <property type="match status" value="1"/>
</dbReference>
<dbReference type="PANTHER" id="PTHR30544">
    <property type="entry name" value="23S RRNA METHYLTRANSFERASE"/>
    <property type="match status" value="1"/>
</dbReference>
<dbReference type="PANTHER" id="PTHR30544:SF5">
    <property type="entry name" value="RADICAL SAM CORE DOMAIN-CONTAINING PROTEIN"/>
    <property type="match status" value="1"/>
</dbReference>
<dbReference type="Pfam" id="PF04055">
    <property type="entry name" value="Radical_SAM"/>
    <property type="match status" value="1"/>
</dbReference>
<dbReference type="Pfam" id="PF21016">
    <property type="entry name" value="RlmN_N"/>
    <property type="match status" value="1"/>
</dbReference>
<dbReference type="PIRSF" id="PIRSF006004">
    <property type="entry name" value="CHP00048"/>
    <property type="match status" value="1"/>
</dbReference>
<dbReference type="SFLD" id="SFLDF00275">
    <property type="entry name" value="adenosine_C2_methyltransferase"/>
    <property type="match status" value="1"/>
</dbReference>
<dbReference type="SFLD" id="SFLDS00029">
    <property type="entry name" value="Radical_SAM"/>
    <property type="match status" value="1"/>
</dbReference>
<dbReference type="SUPFAM" id="SSF102114">
    <property type="entry name" value="Radical SAM enzymes"/>
    <property type="match status" value="1"/>
</dbReference>
<dbReference type="PROSITE" id="PS51918">
    <property type="entry name" value="RADICAL_SAM"/>
    <property type="match status" value="1"/>
</dbReference>
<feature type="chain" id="PRO_0000350286" description="Dual-specificity RNA methyltransferase RlmN">
    <location>
        <begin position="1"/>
        <end position="379"/>
    </location>
</feature>
<feature type="domain" description="Radical SAM core" evidence="2">
    <location>
        <begin position="96"/>
        <end position="348"/>
    </location>
</feature>
<feature type="active site" description="Proton acceptor" evidence="1">
    <location>
        <position position="90"/>
    </location>
</feature>
<feature type="active site" description="S-methylcysteine intermediate" evidence="1">
    <location>
        <position position="353"/>
    </location>
</feature>
<feature type="binding site" evidence="1">
    <location>
        <position position="110"/>
    </location>
    <ligand>
        <name>[4Fe-4S] cluster</name>
        <dbReference type="ChEBI" id="CHEBI:49883"/>
        <note>4Fe-4S-S-AdoMet</note>
    </ligand>
</feature>
<feature type="binding site" evidence="1">
    <location>
        <position position="114"/>
    </location>
    <ligand>
        <name>[4Fe-4S] cluster</name>
        <dbReference type="ChEBI" id="CHEBI:49883"/>
        <note>4Fe-4S-S-AdoMet</note>
    </ligand>
</feature>
<feature type="binding site" evidence="1">
    <location>
        <position position="117"/>
    </location>
    <ligand>
        <name>[4Fe-4S] cluster</name>
        <dbReference type="ChEBI" id="CHEBI:49883"/>
        <note>4Fe-4S-S-AdoMet</note>
    </ligand>
</feature>
<feature type="binding site" evidence="1">
    <location>
        <begin position="179"/>
        <end position="180"/>
    </location>
    <ligand>
        <name>S-adenosyl-L-methionine</name>
        <dbReference type="ChEBI" id="CHEBI:59789"/>
    </ligand>
</feature>
<feature type="binding site" evidence="1">
    <location>
        <position position="211"/>
    </location>
    <ligand>
        <name>S-adenosyl-L-methionine</name>
        <dbReference type="ChEBI" id="CHEBI:59789"/>
    </ligand>
</feature>
<feature type="binding site" evidence="1">
    <location>
        <begin position="233"/>
        <end position="235"/>
    </location>
    <ligand>
        <name>S-adenosyl-L-methionine</name>
        <dbReference type="ChEBI" id="CHEBI:59789"/>
    </ligand>
</feature>
<feature type="binding site" evidence="1">
    <location>
        <position position="310"/>
    </location>
    <ligand>
        <name>S-adenosyl-L-methionine</name>
        <dbReference type="ChEBI" id="CHEBI:59789"/>
    </ligand>
</feature>
<feature type="disulfide bond" description="(transient)" evidence="1">
    <location>
        <begin position="103"/>
        <end position="353"/>
    </location>
</feature>
<name>RLMN_NITEC</name>
<accession>Q0AE39</accession>
<evidence type="ECO:0000255" key="1">
    <source>
        <dbReference type="HAMAP-Rule" id="MF_01849"/>
    </source>
</evidence>
<evidence type="ECO:0000255" key="2">
    <source>
        <dbReference type="PROSITE-ProRule" id="PRU01266"/>
    </source>
</evidence>
<proteinExistence type="inferred from homology"/>
<organism>
    <name type="scientific">Nitrosomonas eutropha (strain DSM 101675 / C91 / Nm57)</name>
    <dbReference type="NCBI Taxonomy" id="335283"/>
    <lineage>
        <taxon>Bacteria</taxon>
        <taxon>Pseudomonadati</taxon>
        <taxon>Pseudomonadota</taxon>
        <taxon>Betaproteobacteria</taxon>
        <taxon>Nitrosomonadales</taxon>
        <taxon>Nitrosomonadaceae</taxon>
        <taxon>Nitrosomonas</taxon>
    </lineage>
</organism>
<sequence length="379" mass="41962">MINLLDFNKTGLIHFCEEMGEKPYRARQLLRWVHRFGKTEFIEMSDLAKTFRQKLMERAVVHPPEIISDHTAGDGTRKWLLSTGTGNAVEMVFIPEPNRGTLCVSSQVGCALACSFCSTGRQGFNRNLSVAEIIGQLWWANRLLEGQVGELFSPDVAQIRADNTDTRRPVTNVVMMGMGEPLANFENVVTALDLMLSDDAYGLSRRRVTVSTSGLVPALDRLRERCPVALAVSLHAPNDALRDQLVPINKKYPIRDLLAACERYLPAAPRDFITFEYVMLRDVNDSIALARELVQVVRNIPCKLNLIPFNTFAGSGYERSNTDAIDNFRDVLMQAGIVTTVRKTRGDDIAAACGQLAGQVKDKTRRTGTCGSGRAVVTG</sequence>
<protein>
    <recommendedName>
        <fullName evidence="1">Dual-specificity RNA methyltransferase RlmN</fullName>
        <ecNumber evidence="1">2.1.1.192</ecNumber>
    </recommendedName>
    <alternativeName>
        <fullName evidence="1">23S rRNA (adenine(2503)-C(2))-methyltransferase</fullName>
    </alternativeName>
    <alternativeName>
        <fullName evidence="1">23S rRNA m2A2503 methyltransferase</fullName>
    </alternativeName>
    <alternativeName>
        <fullName evidence="1">Ribosomal RNA large subunit methyltransferase N</fullName>
    </alternativeName>
    <alternativeName>
        <fullName evidence="1">tRNA (adenine(37)-C(2))-methyltransferase</fullName>
    </alternativeName>
    <alternativeName>
        <fullName evidence="1">tRNA m2A37 methyltransferase</fullName>
    </alternativeName>
</protein>
<comment type="function">
    <text evidence="1">Specifically methylates position 2 of adenine 2503 in 23S rRNA and position 2 of adenine 37 in tRNAs. m2A2503 modification seems to play a crucial role in the proofreading step occurring at the peptidyl transferase center and thus would serve to optimize ribosomal fidelity.</text>
</comment>
<comment type="catalytic activity">
    <reaction evidence="1">
        <text>adenosine(2503) in 23S rRNA + 2 reduced [2Fe-2S]-[ferredoxin] + 2 S-adenosyl-L-methionine = 2-methyladenosine(2503) in 23S rRNA + 5'-deoxyadenosine + L-methionine + 2 oxidized [2Fe-2S]-[ferredoxin] + S-adenosyl-L-homocysteine</text>
        <dbReference type="Rhea" id="RHEA:42916"/>
        <dbReference type="Rhea" id="RHEA-COMP:10000"/>
        <dbReference type="Rhea" id="RHEA-COMP:10001"/>
        <dbReference type="Rhea" id="RHEA-COMP:10152"/>
        <dbReference type="Rhea" id="RHEA-COMP:10282"/>
        <dbReference type="ChEBI" id="CHEBI:17319"/>
        <dbReference type="ChEBI" id="CHEBI:33737"/>
        <dbReference type="ChEBI" id="CHEBI:33738"/>
        <dbReference type="ChEBI" id="CHEBI:57844"/>
        <dbReference type="ChEBI" id="CHEBI:57856"/>
        <dbReference type="ChEBI" id="CHEBI:59789"/>
        <dbReference type="ChEBI" id="CHEBI:74411"/>
        <dbReference type="ChEBI" id="CHEBI:74497"/>
        <dbReference type="EC" id="2.1.1.192"/>
    </reaction>
</comment>
<comment type="catalytic activity">
    <reaction evidence="1">
        <text>adenosine(37) in tRNA + 2 reduced [2Fe-2S]-[ferredoxin] + 2 S-adenosyl-L-methionine = 2-methyladenosine(37) in tRNA + 5'-deoxyadenosine + L-methionine + 2 oxidized [2Fe-2S]-[ferredoxin] + S-adenosyl-L-homocysteine</text>
        <dbReference type="Rhea" id="RHEA:43332"/>
        <dbReference type="Rhea" id="RHEA-COMP:10000"/>
        <dbReference type="Rhea" id="RHEA-COMP:10001"/>
        <dbReference type="Rhea" id="RHEA-COMP:10162"/>
        <dbReference type="Rhea" id="RHEA-COMP:10485"/>
        <dbReference type="ChEBI" id="CHEBI:17319"/>
        <dbReference type="ChEBI" id="CHEBI:33737"/>
        <dbReference type="ChEBI" id="CHEBI:33738"/>
        <dbReference type="ChEBI" id="CHEBI:57844"/>
        <dbReference type="ChEBI" id="CHEBI:57856"/>
        <dbReference type="ChEBI" id="CHEBI:59789"/>
        <dbReference type="ChEBI" id="CHEBI:74411"/>
        <dbReference type="ChEBI" id="CHEBI:74497"/>
        <dbReference type="EC" id="2.1.1.192"/>
    </reaction>
</comment>
<comment type="cofactor">
    <cofactor evidence="1">
        <name>[4Fe-4S] cluster</name>
        <dbReference type="ChEBI" id="CHEBI:49883"/>
    </cofactor>
    <text evidence="1">Binds 1 [4Fe-4S] cluster. The cluster is coordinated with 3 cysteines and an exchangeable S-adenosyl-L-methionine.</text>
</comment>
<comment type="subcellular location">
    <subcellularLocation>
        <location evidence="1">Cytoplasm</location>
    </subcellularLocation>
</comment>
<comment type="miscellaneous">
    <text evidence="1">Reaction proceeds by a ping-pong mechanism involving intermediate methylation of a conserved cysteine residue.</text>
</comment>
<comment type="similarity">
    <text evidence="1">Belongs to the radical SAM superfamily. RlmN family.</text>
</comment>